<accession>P0C8I0</accession>
<sequence length="327" mass="38885">MEELLIEDSQRFTIFPIQHPECWNWYKKLESLTWTAQEVDMCKDIDDWEAMPKPQREFYKQILAFFVVADEIVIENLLTNFMREIKVKEVLYFYTMQAAQECVHSEAYSIQVKTLIPDEKEQQRIFSGIEKHPIIRKMAQWVQQWMDPVKNSLGERLVGFAAVEGILFQNHFVAIQFLKEQNIMPGLVSYNEFISRDEGMHCSFACFLISNYLNNIPEEKIIHKILKEAVELVDEFISYAFDKARGSVPGFSKEMLFQYIRYFTDNLCFMLQCKSIYKVENPFPQMTKFFLNEVEKTNFFELRPTQYQNCVKDDAFAFKLFLNDDDF</sequence>
<organismHost>
    <name type="scientific">Ornithodoros</name>
    <name type="common">relapsing fever ticks</name>
    <dbReference type="NCBI Taxonomy" id="6937"/>
</organismHost>
<organismHost>
    <name type="scientific">Phacochoerus aethiopicus</name>
    <name type="common">Warthog</name>
    <dbReference type="NCBI Taxonomy" id="85517"/>
</organismHost>
<organismHost>
    <name type="scientific">Phacochoerus africanus</name>
    <name type="common">Warthog</name>
    <dbReference type="NCBI Taxonomy" id="41426"/>
</organismHost>
<organismHost>
    <name type="scientific">Potamochoerus larvatus</name>
    <name type="common">Bushpig</name>
    <dbReference type="NCBI Taxonomy" id="273792"/>
</organismHost>
<organismHost>
    <name type="scientific">Sus scrofa</name>
    <name type="common">Pig</name>
    <dbReference type="NCBI Taxonomy" id="9823"/>
</organismHost>
<organism>
    <name type="scientific">African swine fever virus (isolate Pig/Kenya/KEN-50/1950)</name>
    <name type="common">ASFV</name>
    <dbReference type="NCBI Taxonomy" id="561445"/>
    <lineage>
        <taxon>Viruses</taxon>
        <taxon>Varidnaviria</taxon>
        <taxon>Bamfordvirae</taxon>
        <taxon>Nucleocytoviricota</taxon>
        <taxon>Pokkesviricetes</taxon>
        <taxon>Asfuvirales</taxon>
        <taxon>Asfarviridae</taxon>
        <taxon>Asfivirus</taxon>
        <taxon>African swine fever virus</taxon>
    </lineage>
</organism>
<feature type="chain" id="PRO_0000355532" description="Ribonucleoside-diphosphate reductase small chain">
    <location>
        <begin position="1"/>
        <end position="327"/>
    </location>
</feature>
<feature type="active site" evidence="2">
    <location>
        <position position="108"/>
    </location>
</feature>
<feature type="binding site" evidence="2">
    <location>
        <position position="70"/>
    </location>
    <ligand>
        <name>Fe cation</name>
        <dbReference type="ChEBI" id="CHEBI:24875"/>
        <label>1</label>
    </ligand>
</feature>
<feature type="binding site" evidence="2">
    <location>
        <position position="101"/>
    </location>
    <ligand>
        <name>Fe cation</name>
        <dbReference type="ChEBI" id="CHEBI:24875"/>
        <label>1</label>
    </ligand>
</feature>
<feature type="binding site" evidence="1">
    <location>
        <position position="101"/>
    </location>
    <ligand>
        <name>Fe cation</name>
        <dbReference type="ChEBI" id="CHEBI:24875"/>
        <label>2</label>
    </ligand>
</feature>
<feature type="binding site" evidence="2">
    <location>
        <position position="104"/>
    </location>
    <ligand>
        <name>Fe cation</name>
        <dbReference type="ChEBI" id="CHEBI:24875"/>
        <label>1</label>
    </ligand>
</feature>
<feature type="binding site" evidence="1">
    <location>
        <position position="164"/>
    </location>
    <ligand>
        <name>Fe cation</name>
        <dbReference type="ChEBI" id="CHEBI:24875"/>
        <label>2</label>
    </ligand>
</feature>
<feature type="binding site" evidence="1">
    <location>
        <position position="198"/>
    </location>
    <ligand>
        <name>Fe cation</name>
        <dbReference type="ChEBI" id="CHEBI:24875"/>
        <label>2</label>
    </ligand>
</feature>
<feature type="binding site" evidence="1">
    <location>
        <position position="201"/>
    </location>
    <ligand>
        <name>Fe cation</name>
        <dbReference type="ChEBI" id="CHEBI:24875"/>
        <label>2</label>
    </ligand>
</feature>
<name>RIR2_ASFK5</name>
<keyword id="KW-0215">Deoxyribonucleotide synthesis</keyword>
<keyword id="KW-0235">DNA replication</keyword>
<keyword id="KW-0244">Early protein</keyword>
<keyword id="KW-0408">Iron</keyword>
<keyword id="KW-0479">Metal-binding</keyword>
<keyword id="KW-0560">Oxidoreductase</keyword>
<keyword id="KW-1194">Viral DNA replication</keyword>
<comment type="function">
    <text evidence="1">Ribonucleoside-diphosphate reductase holoenzyme provides the precursors necessary for viral DNA synthesis. Allows virus growth in non-dividing cells. Catalyzes the biosynthesis of deoxyribonucleotides from the corresponding ribonucleotides (By similarity).</text>
</comment>
<comment type="catalytic activity">
    <reaction evidence="2">
        <text>a 2'-deoxyribonucleoside 5'-diphosphate + [thioredoxin]-disulfide + H2O = a ribonucleoside 5'-diphosphate + [thioredoxin]-dithiol</text>
        <dbReference type="Rhea" id="RHEA:23252"/>
        <dbReference type="Rhea" id="RHEA-COMP:10698"/>
        <dbReference type="Rhea" id="RHEA-COMP:10700"/>
        <dbReference type="ChEBI" id="CHEBI:15377"/>
        <dbReference type="ChEBI" id="CHEBI:29950"/>
        <dbReference type="ChEBI" id="CHEBI:50058"/>
        <dbReference type="ChEBI" id="CHEBI:57930"/>
        <dbReference type="ChEBI" id="CHEBI:73316"/>
        <dbReference type="EC" id="1.17.4.1"/>
    </reaction>
</comment>
<comment type="cofactor">
    <cofactor evidence="1">
        <name>Fe cation</name>
        <dbReference type="ChEBI" id="CHEBI:24875"/>
    </cofactor>
    <text evidence="1">Binds 2 iron ions per subunit.</text>
</comment>
<comment type="subunit">
    <text evidence="1">Heterotetramer composed of a homodimer of the large subunit (R1) and a homodimer of the small subunit (R2). Larger multisubunit protein complex are also active, composed of (R1)n(R2)n (By similarity).</text>
</comment>
<comment type="induction">
    <text evidence="3">Expressed in the early phase of the viral replicative cycle.</text>
</comment>
<comment type="similarity">
    <text evidence="3">Belongs to the ribonucleoside diphosphate reductase small chain family.</text>
</comment>
<dbReference type="EC" id="1.17.4.1"/>
<dbReference type="EMBL" id="AY261360">
    <property type="status" value="NOT_ANNOTATED_CDS"/>
    <property type="molecule type" value="Genomic_DNA"/>
</dbReference>
<dbReference type="SMR" id="P0C8I0"/>
<dbReference type="Proteomes" id="UP000000861">
    <property type="component" value="Segment"/>
</dbReference>
<dbReference type="GO" id="GO:0046872">
    <property type="term" value="F:metal ion binding"/>
    <property type="evidence" value="ECO:0007669"/>
    <property type="project" value="UniProtKB-KW"/>
</dbReference>
<dbReference type="GO" id="GO:0004748">
    <property type="term" value="F:ribonucleoside-diphosphate reductase activity, thioredoxin disulfide as acceptor"/>
    <property type="evidence" value="ECO:0007669"/>
    <property type="project" value="UniProtKB-EC"/>
</dbReference>
<dbReference type="GO" id="GO:0009263">
    <property type="term" value="P:deoxyribonucleotide biosynthetic process"/>
    <property type="evidence" value="ECO:0007669"/>
    <property type="project" value="UniProtKB-KW"/>
</dbReference>
<dbReference type="GO" id="GO:0006260">
    <property type="term" value="P:DNA replication"/>
    <property type="evidence" value="ECO:0007669"/>
    <property type="project" value="UniProtKB-KW"/>
</dbReference>
<dbReference type="GO" id="GO:0039693">
    <property type="term" value="P:viral DNA genome replication"/>
    <property type="evidence" value="ECO:0007669"/>
    <property type="project" value="UniProtKB-KW"/>
</dbReference>
<dbReference type="CDD" id="cd01049">
    <property type="entry name" value="RNRR2"/>
    <property type="match status" value="1"/>
</dbReference>
<dbReference type="Gene3D" id="1.10.620.20">
    <property type="entry name" value="Ribonucleotide Reductase, subunit A"/>
    <property type="match status" value="1"/>
</dbReference>
<dbReference type="InterPro" id="IPR009078">
    <property type="entry name" value="Ferritin-like_SF"/>
</dbReference>
<dbReference type="InterPro" id="IPR012348">
    <property type="entry name" value="RNR-like"/>
</dbReference>
<dbReference type="InterPro" id="IPR033909">
    <property type="entry name" value="RNR_small"/>
</dbReference>
<dbReference type="InterPro" id="IPR030475">
    <property type="entry name" value="RNR_small_AS"/>
</dbReference>
<dbReference type="InterPro" id="IPR000358">
    <property type="entry name" value="RNR_small_fam"/>
</dbReference>
<dbReference type="PANTHER" id="PTHR23409">
    <property type="entry name" value="RIBONUCLEOSIDE-DIPHOSPHATE REDUCTASE SMALL CHAIN"/>
    <property type="match status" value="1"/>
</dbReference>
<dbReference type="PANTHER" id="PTHR23409:SF18">
    <property type="entry name" value="RIBONUCLEOSIDE-DIPHOSPHATE REDUCTASE SUBUNIT M2"/>
    <property type="match status" value="1"/>
</dbReference>
<dbReference type="Pfam" id="PF00268">
    <property type="entry name" value="Ribonuc_red_sm"/>
    <property type="match status" value="1"/>
</dbReference>
<dbReference type="SUPFAM" id="SSF47240">
    <property type="entry name" value="Ferritin-like"/>
    <property type="match status" value="1"/>
</dbReference>
<dbReference type="PROSITE" id="PS00368">
    <property type="entry name" value="RIBORED_SMALL"/>
    <property type="match status" value="1"/>
</dbReference>
<proteinExistence type="inferred from homology"/>
<reference key="1">
    <citation type="submission" date="2003-03" db="EMBL/GenBank/DDBJ databases">
        <title>African swine fever virus genomes.</title>
        <authorList>
            <person name="Kutish G.F."/>
            <person name="Rock D.L."/>
        </authorList>
    </citation>
    <scope>NUCLEOTIDE SEQUENCE [LARGE SCALE GENOMIC DNA]</scope>
</reference>
<gene>
    <name type="ordered locus">Ken-056</name>
</gene>
<evidence type="ECO:0000250" key="1"/>
<evidence type="ECO:0000255" key="2">
    <source>
        <dbReference type="PROSITE-ProRule" id="PRU10014"/>
    </source>
</evidence>
<evidence type="ECO:0000305" key="3"/>
<protein>
    <recommendedName>
        <fullName>Ribonucleoside-diphosphate reductase small chain</fullName>
        <ecNumber>1.17.4.1</ecNumber>
    </recommendedName>
    <alternativeName>
        <fullName>Ribonucleotide reductase small subunit</fullName>
    </alternativeName>
</protein>